<proteinExistence type="inferred from homology"/>
<keyword id="KW-0249">Electron transport</keyword>
<keyword id="KW-0472">Membrane</keyword>
<keyword id="KW-0496">Mitochondrion</keyword>
<keyword id="KW-0520">NAD</keyword>
<keyword id="KW-0679">Respiratory chain</keyword>
<keyword id="KW-1278">Translocase</keyword>
<keyword id="KW-0812">Transmembrane</keyword>
<keyword id="KW-1133">Transmembrane helix</keyword>
<keyword id="KW-0813">Transport</keyword>
<keyword id="KW-0830">Ubiquinone</keyword>
<dbReference type="EC" id="7.1.1.2"/>
<dbReference type="EMBL" id="DQ336395">
    <property type="protein sequence ID" value="ABC60381.1"/>
    <property type="molecule type" value="Genomic_DNA"/>
</dbReference>
<dbReference type="RefSeq" id="YP_492630.1">
    <property type="nucleotide sequence ID" value="NC_007787.2"/>
</dbReference>
<dbReference type="SMR" id="Q2LCR2"/>
<dbReference type="GeneID" id="3912625"/>
<dbReference type="GO" id="GO:0031966">
    <property type="term" value="C:mitochondrial membrane"/>
    <property type="evidence" value="ECO:0007669"/>
    <property type="project" value="UniProtKB-SubCell"/>
</dbReference>
<dbReference type="GO" id="GO:0008137">
    <property type="term" value="F:NADH dehydrogenase (ubiquinone) activity"/>
    <property type="evidence" value="ECO:0007669"/>
    <property type="project" value="UniProtKB-EC"/>
</dbReference>
<dbReference type="Gene3D" id="1.20.120.1200">
    <property type="entry name" value="NADH-ubiquinone/plastoquinone oxidoreductase chain 6, subunit NuoJ"/>
    <property type="match status" value="1"/>
</dbReference>
<dbReference type="InterPro" id="IPR001457">
    <property type="entry name" value="NADH_UbQ/plastoQ_OxRdtase_su6"/>
</dbReference>
<dbReference type="InterPro" id="IPR042106">
    <property type="entry name" value="Nuo/plastoQ_OxRdtase_6_NuoJ"/>
</dbReference>
<dbReference type="PANTHER" id="PTHR33269">
    <property type="entry name" value="NADH-UBIQUINONE OXIDOREDUCTASE CHAIN 6"/>
    <property type="match status" value="1"/>
</dbReference>
<dbReference type="PANTHER" id="PTHR33269:SF17">
    <property type="entry name" value="NADH-UBIQUINONE OXIDOREDUCTASE CHAIN 6"/>
    <property type="match status" value="1"/>
</dbReference>
<dbReference type="Pfam" id="PF00499">
    <property type="entry name" value="Oxidored_q3"/>
    <property type="match status" value="1"/>
</dbReference>
<geneLocation type="mitochondrion"/>
<accession>Q2LCR2</accession>
<feature type="chain" id="PRO_0000312394" description="NADH-ubiquinone oxidoreductase chain 6">
    <location>
        <begin position="1"/>
        <end position="226"/>
    </location>
</feature>
<feature type="transmembrane region" description="Helical" evidence="2">
    <location>
        <begin position="2"/>
        <end position="22"/>
    </location>
</feature>
<feature type="transmembrane region" description="Helical" evidence="2">
    <location>
        <begin position="28"/>
        <end position="48"/>
    </location>
</feature>
<feature type="transmembrane region" description="Helical" evidence="2">
    <location>
        <begin position="56"/>
        <end position="76"/>
    </location>
</feature>
<feature type="transmembrane region" description="Helical" evidence="2">
    <location>
        <begin position="90"/>
        <end position="110"/>
    </location>
</feature>
<feature type="transmembrane region" description="Helical" evidence="2">
    <location>
        <begin position="169"/>
        <end position="189"/>
    </location>
</feature>
<protein>
    <recommendedName>
        <fullName>NADH-ubiquinone oxidoreductase chain 6</fullName>
        <ecNumber>7.1.1.2</ecNumber>
    </recommendedName>
    <alternativeName>
        <fullName>NADH dehydrogenase subunit 6</fullName>
    </alternativeName>
</protein>
<comment type="function">
    <text evidence="1">Core subunit of the mitochondrial membrane respiratory chain NADH dehydrogenase (Complex I) that is believed to belong to the minimal assembly required for catalysis. Complex I functions in the transfer of electrons from NADH to the respiratory chain. The immediate electron acceptor for the enzyme is believed to be ubiquinone (By similarity).</text>
</comment>
<comment type="catalytic activity">
    <reaction>
        <text>a ubiquinone + NADH + 5 H(+)(in) = a ubiquinol + NAD(+) + 4 H(+)(out)</text>
        <dbReference type="Rhea" id="RHEA:29091"/>
        <dbReference type="Rhea" id="RHEA-COMP:9565"/>
        <dbReference type="Rhea" id="RHEA-COMP:9566"/>
        <dbReference type="ChEBI" id="CHEBI:15378"/>
        <dbReference type="ChEBI" id="CHEBI:16389"/>
        <dbReference type="ChEBI" id="CHEBI:17976"/>
        <dbReference type="ChEBI" id="CHEBI:57540"/>
        <dbReference type="ChEBI" id="CHEBI:57945"/>
        <dbReference type="EC" id="7.1.1.2"/>
    </reaction>
</comment>
<comment type="subcellular location">
    <subcellularLocation>
        <location evidence="3">Mitochondrion membrane</location>
        <topology evidence="3">Multi-pass membrane protein</topology>
    </subcellularLocation>
</comment>
<comment type="similarity">
    <text evidence="3">Belongs to the complex I subunit 6 family.</text>
</comment>
<evidence type="ECO:0000250" key="1"/>
<evidence type="ECO:0000255" key="2"/>
<evidence type="ECO:0000305" key="3"/>
<gene>
    <name type="primary">nad6</name>
</gene>
<organism>
    <name type="scientific">Dictyostelium citrinum</name>
    <name type="common">Slime mold</name>
    <dbReference type="NCBI Taxonomy" id="361072"/>
    <lineage>
        <taxon>Eukaryota</taxon>
        <taxon>Amoebozoa</taxon>
        <taxon>Evosea</taxon>
        <taxon>Eumycetozoa</taxon>
        <taxon>Dictyostelia</taxon>
        <taxon>Dictyosteliales</taxon>
        <taxon>Dictyosteliaceae</taxon>
        <taxon>Dictyostelium</taxon>
    </lineage>
</organism>
<sequence>MSTLGLLLILLGIIITCTFVILRSVNPIYSILNLIVIYGCYASILLTVEMEFLACIYILVNVGAIAVLFLFIVMMININIVEIQETMKKYNIYMFVGFIGLIGIMGILITNYQIRIKEEVIADFSMFLLNTEITTLQATPSYLDFYELFVETTDLRAMGSNVIYGSQSIWFIMACIILLIGMVGVIYITEDLIIEKRKLNARRRQDINSQVLREYKITIKNYREIK</sequence>
<reference key="1">
    <citation type="journal article" date="2008" name="Mol. Biol. Evol.">
        <title>Mitochondrial genome evolution in the social amoebae.</title>
        <authorList>
            <person name="Heidel A.J."/>
            <person name="Gloeckner G."/>
        </authorList>
    </citation>
    <scope>NUCLEOTIDE SEQUENCE [LARGE SCALE GENOMIC DNA]</scope>
</reference>
<name>NU6M_DICCI</name>